<feature type="chain" id="PRO_1000148408" description="UPF0302 protein BCQ_1589">
    <location>
        <begin position="1"/>
        <end position="178"/>
    </location>
</feature>
<reference key="1">
    <citation type="journal article" date="2009" name="J. Bacteriol.">
        <title>Complete genome sequence of the extremophilic Bacillus cereus strain Q1 with industrial applications.</title>
        <authorList>
            <person name="Xiong Z."/>
            <person name="Jiang Y."/>
            <person name="Qi D."/>
            <person name="Lu H."/>
            <person name="Yang F."/>
            <person name="Yang J."/>
            <person name="Chen L."/>
            <person name="Sun L."/>
            <person name="Xu X."/>
            <person name="Xue Y."/>
            <person name="Zhu Y."/>
            <person name="Jin Q."/>
        </authorList>
    </citation>
    <scope>NUCLEOTIDE SEQUENCE [LARGE SCALE GENOMIC DNA]</scope>
    <source>
        <strain>Q1</strain>
    </source>
</reference>
<organism>
    <name type="scientific">Bacillus cereus (strain Q1)</name>
    <dbReference type="NCBI Taxonomy" id="361100"/>
    <lineage>
        <taxon>Bacteria</taxon>
        <taxon>Bacillati</taxon>
        <taxon>Bacillota</taxon>
        <taxon>Bacilli</taxon>
        <taxon>Bacillales</taxon>
        <taxon>Bacillaceae</taxon>
        <taxon>Bacillus</taxon>
        <taxon>Bacillus cereus group</taxon>
    </lineage>
</organism>
<comment type="similarity">
    <text evidence="1">Belongs to the UPF0302 family.</text>
</comment>
<proteinExistence type="inferred from homology"/>
<gene>
    <name type="ordered locus">BCQ_1589</name>
</gene>
<evidence type="ECO:0000255" key="1">
    <source>
        <dbReference type="HAMAP-Rule" id="MF_00760"/>
    </source>
</evidence>
<protein>
    <recommendedName>
        <fullName evidence="1">UPF0302 protein BCQ_1589</fullName>
    </recommendedName>
</protein>
<name>Y1589_BACCQ</name>
<accession>B9IVP2</accession>
<sequence length="178" mass="21432">MNTPVSVNEKKDFVKWFLNNYQLKQRECVWILNYLMSHDQLMHKVHFVEHAKYCPRGLVMSANCVKDTPFHFFKQNVMTTDAEKSFHDIRLNRDEDIYIQLNFKSSFQNANYVAVLEENPYLPKHIEVNEKDRLLAERFLEESVFSFRRERLLKQIDEALDKQDKEAFHRLTAELKML</sequence>
<dbReference type="EMBL" id="CP000227">
    <property type="protein sequence ID" value="ACM12017.1"/>
    <property type="molecule type" value="Genomic_DNA"/>
</dbReference>
<dbReference type="SMR" id="B9IVP2"/>
<dbReference type="KEGG" id="bcq:BCQ_1589"/>
<dbReference type="HOGENOM" id="CLU_126019_0_0_9"/>
<dbReference type="Proteomes" id="UP000000441">
    <property type="component" value="Chromosome"/>
</dbReference>
<dbReference type="Gene3D" id="3.40.1530.30">
    <property type="entry name" value="Uncharacterised family UPF0302, N-terminal domain"/>
    <property type="match status" value="1"/>
</dbReference>
<dbReference type="Gene3D" id="4.10.810.10">
    <property type="entry name" value="Virus Scaffolding Protein, Chain A"/>
    <property type="match status" value="1"/>
</dbReference>
<dbReference type="HAMAP" id="MF_00760">
    <property type="entry name" value="UPF0302"/>
    <property type="match status" value="1"/>
</dbReference>
<dbReference type="InterPro" id="IPR014957">
    <property type="entry name" value="IDEAL_dom"/>
</dbReference>
<dbReference type="InterPro" id="IPR011188">
    <property type="entry name" value="UPF0302"/>
</dbReference>
<dbReference type="InterPro" id="IPR014963">
    <property type="entry name" value="UPF0302_N"/>
</dbReference>
<dbReference type="InterPro" id="IPR038091">
    <property type="entry name" value="UPF0302_N_sf"/>
</dbReference>
<dbReference type="InterPro" id="IPR027393">
    <property type="entry name" value="Virus_scaffolding_prot_C"/>
</dbReference>
<dbReference type="NCBIfam" id="NF002965">
    <property type="entry name" value="PRK03636.1"/>
    <property type="match status" value="1"/>
</dbReference>
<dbReference type="Pfam" id="PF08858">
    <property type="entry name" value="IDEAL"/>
    <property type="match status" value="1"/>
</dbReference>
<dbReference type="Pfam" id="PF08864">
    <property type="entry name" value="UPF0302"/>
    <property type="match status" value="1"/>
</dbReference>
<dbReference type="PIRSF" id="PIRSF007165">
    <property type="entry name" value="UCP007165"/>
    <property type="match status" value="1"/>
</dbReference>
<dbReference type="SMART" id="SM00914">
    <property type="entry name" value="IDEAL"/>
    <property type="match status" value="1"/>
</dbReference>